<gene>
    <name type="ordered locus">PMI0824</name>
</gene>
<protein>
    <recommendedName>
        <fullName evidence="1">UPF0352 protein PMI0824</fullName>
    </recommendedName>
</protein>
<proteinExistence type="inferred from homology"/>
<accession>B4ET91</accession>
<evidence type="ECO:0000255" key="1">
    <source>
        <dbReference type="HAMAP-Rule" id="MF_00816"/>
    </source>
</evidence>
<dbReference type="EMBL" id="AM942759">
    <property type="protein sequence ID" value="CAR41876.1"/>
    <property type="molecule type" value="Genomic_DNA"/>
</dbReference>
<dbReference type="RefSeq" id="WP_004247042.1">
    <property type="nucleotide sequence ID" value="NC_010554.1"/>
</dbReference>
<dbReference type="SMR" id="B4ET91"/>
<dbReference type="EnsemblBacteria" id="CAR41876">
    <property type="protein sequence ID" value="CAR41876"/>
    <property type="gene ID" value="PMI0824"/>
</dbReference>
<dbReference type="KEGG" id="pmr:PMI0824"/>
<dbReference type="eggNOG" id="COG3082">
    <property type="taxonomic scope" value="Bacteria"/>
</dbReference>
<dbReference type="HOGENOM" id="CLU_175457_0_0_6"/>
<dbReference type="Proteomes" id="UP000008319">
    <property type="component" value="Chromosome"/>
</dbReference>
<dbReference type="Gene3D" id="1.10.3390.10">
    <property type="entry name" value="YejL-like"/>
    <property type="match status" value="1"/>
</dbReference>
<dbReference type="HAMAP" id="MF_00816">
    <property type="entry name" value="UPF0352"/>
    <property type="match status" value="1"/>
</dbReference>
<dbReference type="InterPro" id="IPR009857">
    <property type="entry name" value="UPF0352"/>
</dbReference>
<dbReference type="InterPro" id="IPR023202">
    <property type="entry name" value="YejL_sf"/>
</dbReference>
<dbReference type="NCBIfam" id="NF010242">
    <property type="entry name" value="PRK13689.1"/>
    <property type="match status" value="1"/>
</dbReference>
<dbReference type="Pfam" id="PF07208">
    <property type="entry name" value="DUF1414"/>
    <property type="match status" value="1"/>
</dbReference>
<dbReference type="PIRSF" id="PIRSF006188">
    <property type="entry name" value="UCP006188"/>
    <property type="match status" value="1"/>
</dbReference>
<dbReference type="SUPFAM" id="SSF158651">
    <property type="entry name" value="YejL-like"/>
    <property type="match status" value="1"/>
</dbReference>
<reference key="1">
    <citation type="journal article" date="2008" name="J. Bacteriol.">
        <title>Complete genome sequence of uropathogenic Proteus mirabilis, a master of both adherence and motility.</title>
        <authorList>
            <person name="Pearson M.M."/>
            <person name="Sebaihia M."/>
            <person name="Churcher C."/>
            <person name="Quail M.A."/>
            <person name="Seshasayee A.S."/>
            <person name="Luscombe N.M."/>
            <person name="Abdellah Z."/>
            <person name="Arrosmith C."/>
            <person name="Atkin B."/>
            <person name="Chillingworth T."/>
            <person name="Hauser H."/>
            <person name="Jagels K."/>
            <person name="Moule S."/>
            <person name="Mungall K."/>
            <person name="Norbertczak H."/>
            <person name="Rabbinowitsch E."/>
            <person name="Walker D."/>
            <person name="Whithead S."/>
            <person name="Thomson N.R."/>
            <person name="Rather P.N."/>
            <person name="Parkhill J."/>
            <person name="Mobley H.L.T."/>
        </authorList>
    </citation>
    <scope>NUCLEOTIDE SEQUENCE [LARGE SCALE GENOMIC DNA]</scope>
    <source>
        <strain>HI4320</strain>
    </source>
</reference>
<comment type="similarity">
    <text evidence="1">Belongs to the UPF0352 family.</text>
</comment>
<sequence length="75" mass="8340">MPQKSRYSDEQVEQLLAELVSVLEKHHTPTDLSLMVLGNMVTNLINTSIAPAQRMLIADSFVHALRASIDEGNIH</sequence>
<name>Y824_PROMH</name>
<organism>
    <name type="scientific">Proteus mirabilis (strain HI4320)</name>
    <dbReference type="NCBI Taxonomy" id="529507"/>
    <lineage>
        <taxon>Bacteria</taxon>
        <taxon>Pseudomonadati</taxon>
        <taxon>Pseudomonadota</taxon>
        <taxon>Gammaproteobacteria</taxon>
        <taxon>Enterobacterales</taxon>
        <taxon>Morganellaceae</taxon>
        <taxon>Proteus</taxon>
    </lineage>
</organism>
<feature type="chain" id="PRO_1000199592" description="UPF0352 protein PMI0824">
    <location>
        <begin position="1"/>
        <end position="75"/>
    </location>
</feature>
<keyword id="KW-1185">Reference proteome</keyword>